<evidence type="ECO:0000255" key="1">
    <source>
        <dbReference type="HAMAP-Rule" id="MF_00759"/>
    </source>
</evidence>
<dbReference type="EMBL" id="AE014299">
    <property type="protein sequence ID" value="AAN54395.1"/>
    <property type="molecule type" value="Genomic_DNA"/>
</dbReference>
<dbReference type="RefSeq" id="NP_716950.1">
    <property type="nucleotide sequence ID" value="NC_004347.2"/>
</dbReference>
<dbReference type="RefSeq" id="WP_011071539.1">
    <property type="nucleotide sequence ID" value="NC_004347.2"/>
</dbReference>
<dbReference type="SMR" id="Q8EH99"/>
<dbReference type="STRING" id="211586.SO_1330"/>
<dbReference type="PaxDb" id="211586-SO_1330"/>
<dbReference type="KEGG" id="son:SO_1330"/>
<dbReference type="PATRIC" id="fig|211586.12.peg.1280"/>
<dbReference type="eggNOG" id="COG3066">
    <property type="taxonomic scope" value="Bacteria"/>
</dbReference>
<dbReference type="HOGENOM" id="CLU_086669_0_0_6"/>
<dbReference type="OrthoDB" id="5634909at2"/>
<dbReference type="PhylomeDB" id="Q8EH99"/>
<dbReference type="BioCyc" id="SONE211586:G1GMP-1228-MONOMER"/>
<dbReference type="Proteomes" id="UP000008186">
    <property type="component" value="Chromosome"/>
</dbReference>
<dbReference type="GO" id="GO:0005737">
    <property type="term" value="C:cytoplasm"/>
    <property type="evidence" value="ECO:0007669"/>
    <property type="project" value="UniProtKB-SubCell"/>
</dbReference>
<dbReference type="GO" id="GO:0003677">
    <property type="term" value="F:DNA binding"/>
    <property type="evidence" value="ECO:0007669"/>
    <property type="project" value="InterPro"/>
</dbReference>
<dbReference type="GO" id="GO:0004519">
    <property type="term" value="F:endonuclease activity"/>
    <property type="evidence" value="ECO:0007669"/>
    <property type="project" value="UniProtKB-UniRule"/>
</dbReference>
<dbReference type="GO" id="GO:0006304">
    <property type="term" value="P:DNA modification"/>
    <property type="evidence" value="ECO:0007669"/>
    <property type="project" value="InterPro"/>
</dbReference>
<dbReference type="GO" id="GO:0006298">
    <property type="term" value="P:mismatch repair"/>
    <property type="evidence" value="ECO:0007669"/>
    <property type="project" value="UniProtKB-UniRule"/>
</dbReference>
<dbReference type="CDD" id="cd00583">
    <property type="entry name" value="MutH-like"/>
    <property type="match status" value="1"/>
</dbReference>
<dbReference type="FunFam" id="3.40.600.10:FF:000001">
    <property type="entry name" value="DNA mismatch repair protein MutH"/>
    <property type="match status" value="1"/>
</dbReference>
<dbReference type="Gene3D" id="3.40.600.10">
    <property type="entry name" value="DNA mismatch repair MutH/Restriction endonuclease, type II"/>
    <property type="match status" value="1"/>
</dbReference>
<dbReference type="HAMAP" id="MF_00759">
    <property type="entry name" value="MutH"/>
    <property type="match status" value="1"/>
</dbReference>
<dbReference type="InterPro" id="IPR004230">
    <property type="entry name" value="DNA_mismatch_repair_MutH"/>
</dbReference>
<dbReference type="InterPro" id="IPR011337">
    <property type="entry name" value="DNA_rep_MutH/RE_typeII_Sau3AI"/>
</dbReference>
<dbReference type="InterPro" id="IPR037057">
    <property type="entry name" value="DNA_rep_MutH/T2_RE_sf"/>
</dbReference>
<dbReference type="InterPro" id="IPR011335">
    <property type="entry name" value="Restrct_endonuc-II-like"/>
</dbReference>
<dbReference type="NCBIfam" id="TIGR02248">
    <property type="entry name" value="mutH_TIGR"/>
    <property type="match status" value="1"/>
</dbReference>
<dbReference type="NCBIfam" id="NF003458">
    <property type="entry name" value="PRK05070.1"/>
    <property type="match status" value="1"/>
</dbReference>
<dbReference type="Pfam" id="PF02976">
    <property type="entry name" value="MutH"/>
    <property type="match status" value="1"/>
</dbReference>
<dbReference type="SMART" id="SM00927">
    <property type="entry name" value="MutH"/>
    <property type="match status" value="1"/>
</dbReference>
<dbReference type="SUPFAM" id="SSF52980">
    <property type="entry name" value="Restriction endonuclease-like"/>
    <property type="match status" value="1"/>
</dbReference>
<protein>
    <recommendedName>
        <fullName evidence="1">DNA mismatch repair protein MutH</fullName>
    </recommendedName>
    <alternativeName>
        <fullName evidence="1">Methyl-directed mismatch repair protein</fullName>
    </alternativeName>
</protein>
<gene>
    <name evidence="1" type="primary">mutH</name>
    <name type="ordered locus">SO_1330</name>
</gene>
<feature type="chain" id="PRO_0000198674" description="DNA mismatch repair protein MutH">
    <location>
        <begin position="1"/>
        <end position="223"/>
    </location>
</feature>
<proteinExistence type="inferred from homology"/>
<comment type="function">
    <text evidence="1">Sequence-specific endonuclease that cleaves unmethylated GATC sequences. It is involved in DNA mismatch repair.</text>
</comment>
<comment type="subcellular location">
    <subcellularLocation>
        <location evidence="1">Cytoplasm</location>
    </subcellularLocation>
</comment>
<comment type="similarity">
    <text evidence="1">Belongs to the MutH family.</text>
</comment>
<organism>
    <name type="scientific">Shewanella oneidensis (strain ATCC 700550 / JCM 31522 / CIP 106686 / LMG 19005 / NCIMB 14063 / MR-1)</name>
    <dbReference type="NCBI Taxonomy" id="211586"/>
    <lineage>
        <taxon>Bacteria</taxon>
        <taxon>Pseudomonadati</taxon>
        <taxon>Pseudomonadota</taxon>
        <taxon>Gammaproteobacteria</taxon>
        <taxon>Alteromonadales</taxon>
        <taxon>Shewanellaceae</taxon>
        <taxon>Shewanella</taxon>
    </lineage>
</organism>
<sequence length="223" mass="24880">MKSIIPPQNLSELLKRANMMAGISLAQIATHRGINVPNNLKRDKGWVGQLIEMELGATAGSKPEQDFLHLGVELKTIPIDNHGKPLETTYVCVAPLTNIEGLTWQNSLVCHKLQRVLWVPVEGERHIPVGERRIGTPTLWEPDPQEQALLQQDWEEIMELIALGKVEKLTARHGEVLQLRPKAANSKAMTHSISEDGSLKMTNPRGFYLKTAFTAMILNKVFG</sequence>
<reference key="1">
    <citation type="journal article" date="2002" name="Nat. Biotechnol.">
        <title>Genome sequence of the dissimilatory metal ion-reducing bacterium Shewanella oneidensis.</title>
        <authorList>
            <person name="Heidelberg J.F."/>
            <person name="Paulsen I.T."/>
            <person name="Nelson K.E."/>
            <person name="Gaidos E.J."/>
            <person name="Nelson W.C."/>
            <person name="Read T.D."/>
            <person name="Eisen J.A."/>
            <person name="Seshadri R."/>
            <person name="Ward N.L."/>
            <person name="Methe B.A."/>
            <person name="Clayton R.A."/>
            <person name="Meyer T."/>
            <person name="Tsapin A."/>
            <person name="Scott J."/>
            <person name="Beanan M.J."/>
            <person name="Brinkac L.M."/>
            <person name="Daugherty S.C."/>
            <person name="DeBoy R.T."/>
            <person name="Dodson R.J."/>
            <person name="Durkin A.S."/>
            <person name="Haft D.H."/>
            <person name="Kolonay J.F."/>
            <person name="Madupu R."/>
            <person name="Peterson J.D."/>
            <person name="Umayam L.A."/>
            <person name="White O."/>
            <person name="Wolf A.M."/>
            <person name="Vamathevan J.J."/>
            <person name="Weidman J.F."/>
            <person name="Impraim M."/>
            <person name="Lee K."/>
            <person name="Berry K.J."/>
            <person name="Lee C."/>
            <person name="Mueller J."/>
            <person name="Khouri H.M."/>
            <person name="Gill J."/>
            <person name="Utterback T.R."/>
            <person name="McDonald L.A."/>
            <person name="Feldblyum T.V."/>
            <person name="Smith H.O."/>
            <person name="Venter J.C."/>
            <person name="Nealson K.H."/>
            <person name="Fraser C.M."/>
        </authorList>
    </citation>
    <scope>NUCLEOTIDE SEQUENCE [LARGE SCALE GENOMIC DNA]</scope>
    <source>
        <strain>ATCC 700550 / JCM 31522 / CIP 106686 / LMG 19005 / NCIMB 14063 / MR-1</strain>
    </source>
</reference>
<name>MUTH_SHEON</name>
<keyword id="KW-0963">Cytoplasm</keyword>
<keyword id="KW-0227">DNA damage</keyword>
<keyword id="KW-0234">DNA repair</keyword>
<keyword id="KW-0255">Endonuclease</keyword>
<keyword id="KW-0378">Hydrolase</keyword>
<keyword id="KW-0540">Nuclease</keyword>
<keyword id="KW-1185">Reference proteome</keyword>
<accession>Q8EH99</accession>